<dbReference type="EC" id="2.5.1.18" evidence="2"/>
<dbReference type="EC" id="1.11.1.-" evidence="2"/>
<dbReference type="EC" id="5.3.3.-" evidence="2"/>
<dbReference type="EMBL" id="U49179">
    <property type="protein sequence ID" value="AAB72239.1"/>
    <property type="molecule type" value="mRNA"/>
</dbReference>
<dbReference type="EMBL" id="BC102540">
    <property type="protein sequence ID" value="AAI02541.1"/>
    <property type="molecule type" value="mRNA"/>
</dbReference>
<dbReference type="RefSeq" id="NP_001071617.1">
    <property type="nucleotide sequence ID" value="NM_001078149.1"/>
</dbReference>
<dbReference type="SMR" id="Q28035"/>
<dbReference type="FunCoup" id="Q28035">
    <property type="interactions" value="117"/>
</dbReference>
<dbReference type="PaxDb" id="9913-ENSBTAP00000005618"/>
<dbReference type="PeptideAtlas" id="Q28035"/>
<dbReference type="GeneID" id="777644"/>
<dbReference type="KEGG" id="bta:777644"/>
<dbReference type="CTD" id="2938"/>
<dbReference type="eggNOG" id="KOG1695">
    <property type="taxonomic scope" value="Eukaryota"/>
</dbReference>
<dbReference type="HOGENOM" id="CLU_039475_4_0_1"/>
<dbReference type="InParanoid" id="Q28035"/>
<dbReference type="OrthoDB" id="414243at2759"/>
<dbReference type="TreeFam" id="TF105321"/>
<dbReference type="BRENDA" id="2.5.1.18">
    <property type="organism ID" value="908"/>
</dbReference>
<dbReference type="Proteomes" id="UP000009136">
    <property type="component" value="Unplaced"/>
</dbReference>
<dbReference type="GO" id="GO:0005829">
    <property type="term" value="C:cytosol"/>
    <property type="evidence" value="ECO:0000318"/>
    <property type="project" value="GO_Central"/>
</dbReference>
<dbReference type="GO" id="GO:0004364">
    <property type="term" value="F:glutathione transferase activity"/>
    <property type="evidence" value="ECO:0000250"/>
    <property type="project" value="UniProtKB"/>
</dbReference>
<dbReference type="GO" id="GO:0004601">
    <property type="term" value="F:peroxidase activity"/>
    <property type="evidence" value="ECO:0007669"/>
    <property type="project" value="UniProtKB-KW"/>
</dbReference>
<dbReference type="GO" id="GO:0004769">
    <property type="term" value="F:steroid Delta-isomerase activity"/>
    <property type="evidence" value="ECO:0000250"/>
    <property type="project" value="UniProtKB"/>
</dbReference>
<dbReference type="GO" id="GO:1901687">
    <property type="term" value="P:glutathione derivative biosynthetic process"/>
    <property type="evidence" value="ECO:0000250"/>
    <property type="project" value="UniProtKB"/>
</dbReference>
<dbReference type="GO" id="GO:0006749">
    <property type="term" value="P:glutathione metabolic process"/>
    <property type="evidence" value="ECO:0000250"/>
    <property type="project" value="UniProtKB"/>
</dbReference>
<dbReference type="GO" id="GO:0006693">
    <property type="term" value="P:prostaglandin metabolic process"/>
    <property type="evidence" value="ECO:0000250"/>
    <property type="project" value="UniProtKB"/>
</dbReference>
<dbReference type="GO" id="GO:0006805">
    <property type="term" value="P:xenobiotic metabolic process"/>
    <property type="evidence" value="ECO:0000318"/>
    <property type="project" value="GO_Central"/>
</dbReference>
<dbReference type="CDD" id="cd03208">
    <property type="entry name" value="GST_C_Alpha"/>
    <property type="match status" value="1"/>
</dbReference>
<dbReference type="CDD" id="cd03077">
    <property type="entry name" value="GST_N_Alpha"/>
    <property type="match status" value="1"/>
</dbReference>
<dbReference type="FunFam" id="1.20.1050.10:FF:000005">
    <property type="entry name" value="Glutathione S-transferase A1"/>
    <property type="match status" value="1"/>
</dbReference>
<dbReference type="Gene3D" id="1.20.1050.10">
    <property type="match status" value="1"/>
</dbReference>
<dbReference type="Gene3D" id="3.40.30.10">
    <property type="entry name" value="Glutaredoxin"/>
    <property type="match status" value="1"/>
</dbReference>
<dbReference type="InterPro" id="IPR010987">
    <property type="entry name" value="Glutathione-S-Trfase_C-like"/>
</dbReference>
<dbReference type="InterPro" id="IPR036282">
    <property type="entry name" value="Glutathione-S-Trfase_C_sf"/>
</dbReference>
<dbReference type="InterPro" id="IPR040079">
    <property type="entry name" value="Glutathione_S-Trfase"/>
</dbReference>
<dbReference type="InterPro" id="IPR004045">
    <property type="entry name" value="Glutathione_S-Trfase_N"/>
</dbReference>
<dbReference type="InterPro" id="IPR003080">
    <property type="entry name" value="GST_alpha"/>
</dbReference>
<dbReference type="InterPro" id="IPR004046">
    <property type="entry name" value="GST_C"/>
</dbReference>
<dbReference type="InterPro" id="IPR050213">
    <property type="entry name" value="GST_superfamily"/>
</dbReference>
<dbReference type="InterPro" id="IPR036249">
    <property type="entry name" value="Thioredoxin-like_sf"/>
</dbReference>
<dbReference type="PANTHER" id="PTHR11571">
    <property type="entry name" value="GLUTATHIONE S-TRANSFERASE"/>
    <property type="match status" value="1"/>
</dbReference>
<dbReference type="PANTHER" id="PTHR11571:SF107">
    <property type="entry name" value="GLUTATHIONE S-TRANSFERASE A1"/>
    <property type="match status" value="1"/>
</dbReference>
<dbReference type="Pfam" id="PF00043">
    <property type="entry name" value="GST_C"/>
    <property type="match status" value="1"/>
</dbReference>
<dbReference type="Pfam" id="PF02798">
    <property type="entry name" value="GST_N"/>
    <property type="match status" value="1"/>
</dbReference>
<dbReference type="PRINTS" id="PR01266">
    <property type="entry name" value="GSTRNSFRASEA"/>
</dbReference>
<dbReference type="SFLD" id="SFLDG01205">
    <property type="entry name" value="AMPS.1"/>
    <property type="match status" value="1"/>
</dbReference>
<dbReference type="SFLD" id="SFLDS00019">
    <property type="entry name" value="Glutathione_Transferase_(cytos"/>
    <property type="match status" value="1"/>
</dbReference>
<dbReference type="SUPFAM" id="SSF47616">
    <property type="entry name" value="GST C-terminal domain-like"/>
    <property type="match status" value="1"/>
</dbReference>
<dbReference type="SUPFAM" id="SSF52833">
    <property type="entry name" value="Thioredoxin-like"/>
    <property type="match status" value="1"/>
</dbReference>
<dbReference type="PROSITE" id="PS50405">
    <property type="entry name" value="GST_CTER"/>
    <property type="match status" value="1"/>
</dbReference>
<dbReference type="PROSITE" id="PS50404">
    <property type="entry name" value="GST_NTER"/>
    <property type="match status" value="1"/>
</dbReference>
<keyword id="KW-0007">Acetylation</keyword>
<keyword id="KW-0963">Cytoplasm</keyword>
<keyword id="KW-0413">Isomerase</keyword>
<keyword id="KW-0443">Lipid metabolism</keyword>
<keyword id="KW-0560">Oxidoreductase</keyword>
<keyword id="KW-0575">Peroxidase</keyword>
<keyword id="KW-1185">Reference proteome</keyword>
<keyword id="KW-0808">Transferase</keyword>
<name>GSTA1_BOVIN</name>
<proteinExistence type="evidence at transcript level"/>
<evidence type="ECO:0000250" key="1"/>
<evidence type="ECO:0000250" key="2">
    <source>
        <dbReference type="UniProtKB" id="P08263"/>
    </source>
</evidence>
<evidence type="ECO:0000250" key="3">
    <source>
        <dbReference type="UniProtKB" id="P13745"/>
    </source>
</evidence>
<evidence type="ECO:0000250" key="4">
    <source>
        <dbReference type="UniProtKB" id="P30115"/>
    </source>
</evidence>
<evidence type="ECO:0000250" key="5">
    <source>
        <dbReference type="UniProtKB" id="P30711"/>
    </source>
</evidence>
<evidence type="ECO:0000250" key="6">
    <source>
        <dbReference type="UniProtKB" id="P80894"/>
    </source>
</evidence>
<evidence type="ECO:0000305" key="7"/>
<comment type="function">
    <text evidence="2">Glutathione S-transferase that catalyzes the nucleophilic attack of the sulfur atom of glutathione on the electrophilic groups of a wide range of exogenous and endogenous compounds. Involved in the formation of glutathione conjugates of both prostaglandin A2 (PGA2) and prostaglandin J2 (PGJ2). It also catalyzes the isomerization of D5-androstene-3,17-dione (AD) into D4-androstene-3,17-dione and may therefore play an important role in hormone biosynthesis. Through its glutathione-dependent peroxidase activity toward the fatty acid hydroperoxide (13S)-hydroperoxy-(9Z,11E)-octadecadienoate/13-HPODE it is also involved in the metabolism of oxidized linoleic acid.</text>
</comment>
<comment type="catalytic activity">
    <reaction evidence="2">
        <text>RX + glutathione = an S-substituted glutathione + a halide anion + H(+)</text>
        <dbReference type="Rhea" id="RHEA:16437"/>
        <dbReference type="ChEBI" id="CHEBI:15378"/>
        <dbReference type="ChEBI" id="CHEBI:16042"/>
        <dbReference type="ChEBI" id="CHEBI:17792"/>
        <dbReference type="ChEBI" id="CHEBI:57925"/>
        <dbReference type="ChEBI" id="CHEBI:90779"/>
        <dbReference type="EC" id="2.5.1.18"/>
    </reaction>
    <physiologicalReaction direction="left-to-right" evidence="2">
        <dbReference type="Rhea" id="RHEA:16438"/>
    </physiologicalReaction>
</comment>
<comment type="catalytic activity">
    <reaction evidence="2">
        <text>prostaglandin A2 + glutathione = prostaglandin A2-S-(R)-glutathione</text>
        <dbReference type="Rhea" id="RHEA:50796"/>
        <dbReference type="ChEBI" id="CHEBI:57925"/>
        <dbReference type="ChEBI" id="CHEBI:133370"/>
        <dbReference type="ChEBI" id="CHEBI:133768"/>
    </reaction>
    <physiologicalReaction direction="left-to-right" evidence="2">
        <dbReference type="Rhea" id="RHEA:50797"/>
    </physiologicalReaction>
</comment>
<comment type="catalytic activity">
    <reaction evidence="2">
        <text>prostaglandin J2 + glutathione = prostaglandin J2-S-(R)-glutathione</text>
        <dbReference type="Rhea" id="RHEA:50804"/>
        <dbReference type="ChEBI" id="CHEBI:57925"/>
        <dbReference type="ChEBI" id="CHEBI:133396"/>
        <dbReference type="ChEBI" id="CHEBI:133771"/>
    </reaction>
    <physiologicalReaction direction="left-to-right" evidence="2">
        <dbReference type="Rhea" id="RHEA:50805"/>
    </physiologicalReaction>
</comment>
<comment type="catalytic activity">
    <reaction evidence="2">
        <text>(13S)-hydroperoxy-(9Z,11E)-octadecadienoate + 2 glutathione = (13S)-hydroxy-(9Z,11E)-octadecadienoate + glutathione disulfide + H2O</text>
        <dbReference type="Rhea" id="RHEA:48888"/>
        <dbReference type="ChEBI" id="CHEBI:15377"/>
        <dbReference type="ChEBI" id="CHEBI:57466"/>
        <dbReference type="ChEBI" id="CHEBI:57925"/>
        <dbReference type="ChEBI" id="CHEBI:58297"/>
        <dbReference type="ChEBI" id="CHEBI:90850"/>
    </reaction>
    <physiologicalReaction direction="left-to-right" evidence="2">
        <dbReference type="Rhea" id="RHEA:48889"/>
    </physiologicalReaction>
</comment>
<comment type="catalytic activity">
    <reaction evidence="2">
        <text>androst-5-ene-3,17-dione = androst-4-ene-3,17-dione</text>
        <dbReference type="Rhea" id="RHEA:43936"/>
        <dbReference type="ChEBI" id="CHEBI:16422"/>
        <dbReference type="ChEBI" id="CHEBI:83865"/>
    </reaction>
    <physiologicalReaction direction="left-to-right" evidence="2">
        <dbReference type="Rhea" id="RHEA:43937"/>
    </physiologicalReaction>
</comment>
<comment type="subunit">
    <text evidence="2">Homodimer or heterodimer of GSTA1 and GSTA2.</text>
</comment>
<comment type="subcellular location">
    <subcellularLocation>
        <location evidence="1">Cytoplasm</location>
    </subcellularLocation>
</comment>
<comment type="tissue specificity">
    <text>Expressed in corpus luteum, adrenal gland, testis, liver, lung, thyroid and kidney.</text>
</comment>
<comment type="similarity">
    <text evidence="7">Belongs to the GST superfamily. Alpha family.</text>
</comment>
<reference key="1">
    <citation type="journal article" date="1999" name="Endocrinology">
        <title>High expression of bovine alpha glutathione S-transferase (GSTA1, GSTA2) subunits is mainly associated with steroidogenically active cells and regulated by gonadotropins in bovine ovarian follicles.</title>
        <authorList>
            <person name="Rabahi F."/>
            <person name="Brule S."/>
            <person name="Sirois J."/>
            <person name="Beckers J.-F.M.P."/>
            <person name="Silversides D.W."/>
            <person name="Lussier J.G."/>
        </authorList>
    </citation>
    <scope>NUCLEOTIDE SEQUENCE [MRNA]</scope>
    <source>
        <strain>Holstein</strain>
        <tissue>Corpus luteum</tissue>
    </source>
</reference>
<reference key="2">
    <citation type="submission" date="2005-08" db="EMBL/GenBank/DDBJ databases">
        <authorList>
            <consortium name="NIH - Mammalian Gene Collection (MGC) project"/>
        </authorList>
    </citation>
    <scope>NUCLEOTIDE SEQUENCE [LARGE SCALE MRNA]</scope>
    <source>
        <strain>Crossbred X Angus</strain>
        <tissue>Liver</tissue>
    </source>
</reference>
<feature type="chain" id="PRO_0000421781" description="Glutathione S-transferase A1">
    <location>
        <begin position="1"/>
        <end position="222"/>
    </location>
</feature>
<feature type="initiator methionine" description="Removed; alternate" evidence="4">
    <location>
        <position position="1"/>
    </location>
</feature>
<feature type="chain" id="PRO_0000185780" description="Glutathione S-transferase A1, N-terminally processed">
    <location>
        <begin position="2"/>
        <end position="222"/>
    </location>
</feature>
<feature type="domain" description="GST N-terminal">
    <location>
        <begin position="3"/>
        <end position="83"/>
    </location>
</feature>
<feature type="domain" description="GST C-terminal">
    <location>
        <begin position="85"/>
        <end position="208"/>
    </location>
</feature>
<feature type="binding site" evidence="3">
    <location>
        <position position="9"/>
    </location>
    <ligand>
        <name>glutathione</name>
        <dbReference type="ChEBI" id="CHEBI:57925"/>
    </ligand>
</feature>
<feature type="binding site" evidence="3">
    <location>
        <position position="45"/>
    </location>
    <ligand>
        <name>glutathione</name>
        <dbReference type="ChEBI" id="CHEBI:57925"/>
    </ligand>
</feature>
<feature type="binding site" evidence="5">
    <location>
        <begin position="54"/>
        <end position="55"/>
    </location>
    <ligand>
        <name>glutathione</name>
        <dbReference type="ChEBI" id="CHEBI:57925"/>
    </ligand>
</feature>
<feature type="binding site" evidence="3">
    <location>
        <begin position="67"/>
        <end position="68"/>
    </location>
    <ligand>
        <name>glutathione</name>
        <dbReference type="ChEBI" id="CHEBI:57925"/>
    </ligand>
</feature>
<feature type="modified residue" description="N-acetylmethionine" evidence="6">
    <location>
        <position position="1"/>
    </location>
</feature>
<feature type="modified residue" description="N-acetylalanine; in Glutathione S-transferase A1, N-terminally processed" evidence="4">
    <location>
        <position position="2"/>
    </location>
</feature>
<feature type="modified residue" description="N6-succinyllysine" evidence="4">
    <location>
        <position position="4"/>
    </location>
</feature>
<feature type="sequence conflict" description="In Ref. 1; AAB72239." evidence="7" ref="1">
    <original>NI</original>
    <variation>SL</variation>
    <location>
        <begin position="190"/>
        <end position="191"/>
    </location>
</feature>
<organism>
    <name type="scientific">Bos taurus</name>
    <name type="common">Bovine</name>
    <dbReference type="NCBI Taxonomy" id="9913"/>
    <lineage>
        <taxon>Eukaryota</taxon>
        <taxon>Metazoa</taxon>
        <taxon>Chordata</taxon>
        <taxon>Craniata</taxon>
        <taxon>Vertebrata</taxon>
        <taxon>Euteleostomi</taxon>
        <taxon>Mammalia</taxon>
        <taxon>Eutheria</taxon>
        <taxon>Laurasiatheria</taxon>
        <taxon>Artiodactyla</taxon>
        <taxon>Ruminantia</taxon>
        <taxon>Pecora</taxon>
        <taxon>Bovidae</taxon>
        <taxon>Bovinae</taxon>
        <taxon>Bos</taxon>
    </lineage>
</organism>
<sequence>MAGKPTLHYFNGRGRMECIRWLLAAAGVEFEEKFIEKPEDLDKLKNDGSLMFQQVPMVEIDGMKLVQTRAILNYIATKYNLYGKDMKERALIDMYSEGVADLGEMIMHFPLCPPAEKDAKLTLIREKTTNRYLPAFENVLKSHGQDYLVGNKLSRADIHLVELLYYVEELDPSLLANFPLLKALKARVSNIPAVKKFLQPGSQRKPPTDEKKIEEARKVFKF</sequence>
<accession>Q28035</accession>
<accession>Q3T072</accession>
<protein>
    <recommendedName>
        <fullName evidence="7">Glutathione S-transferase A1</fullName>
        <ecNumber evidence="2">2.5.1.18</ecNumber>
    </recommendedName>
    <alternativeName>
        <fullName evidence="2">13-hydroperoxyoctadecadienoate peroxidase</fullName>
        <ecNumber evidence="2">1.11.1.-</ecNumber>
    </alternativeName>
    <alternativeName>
        <fullName evidence="2">Androst-5-ene-3,17-dione isomerase</fullName>
        <ecNumber evidence="2">5.3.3.-</ecNumber>
    </alternativeName>
    <alternativeName>
        <fullName>GST class-alpha member 1</fullName>
    </alternativeName>
    <alternativeName>
        <fullName>Glutathione S-transferase alpha-1</fullName>
    </alternativeName>
    <component>
        <recommendedName>
            <fullName>Glutathione S-transferase A1, N-terminally processed</fullName>
        </recommendedName>
    </component>
</protein>
<gene>
    <name type="primary">GSTA1</name>
</gene>